<reference key="1">
    <citation type="journal article" date="2004" name="J. Infect. Dis.">
        <title>Progress toward characterization of the group A Streptococcus metagenome: complete genome sequence of a macrolide-resistant serotype M6 strain.</title>
        <authorList>
            <person name="Banks D.J."/>
            <person name="Porcella S.F."/>
            <person name="Barbian K.D."/>
            <person name="Beres S.B."/>
            <person name="Philips L.E."/>
            <person name="Voyich J.M."/>
            <person name="DeLeo F.R."/>
            <person name="Martin J.M."/>
            <person name="Somerville G.A."/>
            <person name="Musser J.M."/>
        </authorList>
    </citation>
    <scope>NUCLEOTIDE SEQUENCE [LARGE SCALE GENOMIC DNA]</scope>
    <source>
        <strain>ATCC BAA-946 / MGAS10394</strain>
    </source>
</reference>
<organism>
    <name type="scientific">Streptococcus pyogenes serotype M6 (strain ATCC BAA-946 / MGAS10394)</name>
    <dbReference type="NCBI Taxonomy" id="286636"/>
    <lineage>
        <taxon>Bacteria</taxon>
        <taxon>Bacillati</taxon>
        <taxon>Bacillota</taxon>
        <taxon>Bacilli</taxon>
        <taxon>Lactobacillales</taxon>
        <taxon>Streptococcaceae</taxon>
        <taxon>Streptococcus</taxon>
    </lineage>
</organism>
<protein>
    <recommendedName>
        <fullName evidence="1">ATP synthase subunit beta</fullName>
        <ecNumber evidence="1">7.1.2.2</ecNumber>
    </recommendedName>
    <alternativeName>
        <fullName evidence="1">ATP synthase F1 sector subunit beta</fullName>
    </alternativeName>
    <alternativeName>
        <fullName evidence="1">F-ATPase subunit beta</fullName>
    </alternativeName>
</protein>
<feature type="chain" id="PRO_0000254399" description="ATP synthase subunit beta">
    <location>
        <begin position="1"/>
        <end position="468"/>
    </location>
</feature>
<feature type="binding site" evidence="1">
    <location>
        <begin position="155"/>
        <end position="162"/>
    </location>
    <ligand>
        <name>ATP</name>
        <dbReference type="ChEBI" id="CHEBI:30616"/>
    </ligand>
</feature>
<sequence length="468" mass="51077">MSSGKIAQVVGPVVDVMFASGDKLPEINNALIVYKDSDKKQKIVLEVALELGDGMVRTIAMESTDGLTRGLEVLDTGRAISVPVGKETLGRVFNVLGETIDLEEPFAEDVDRQPIHKKAPSFDELSTSSEILETGIKVIDLLAPYLKGGKVGLFGGAGVGKTVLIQELIHNIAQEHGGISVFTGVGERTREGNDLYWEMKESGVIEKTAMVFGQMNEPPGARMRVALTGLTIAEYFRDVEGQDVLLFIDNIFRFTQAGSEVSALLGRMPSAVGYQPTLATEMGQLQERITSTQKGSVTSIQAIYVPADDYTDPAPATAFAHLDSTTNLERKLTQMGIYPAVDPLASSSRALSPEIVGEEHYAVATEVQRVLQRYRELQDIIAILGMDELSDEEKTLVGRARRIQFFLSQNFNVAEQFTGLPGSYVPVAETVRGFKEILEGKYDHLPEDAFRSVGPIEDVIKKAEKMGF</sequence>
<dbReference type="EC" id="7.1.2.2" evidence="1"/>
<dbReference type="EMBL" id="CP000003">
    <property type="protein sequence ID" value="AAT86733.1"/>
    <property type="molecule type" value="Genomic_DNA"/>
</dbReference>
<dbReference type="RefSeq" id="WP_011017611.1">
    <property type="nucleotide sequence ID" value="NC_006086.1"/>
</dbReference>
<dbReference type="SMR" id="Q5XCY0"/>
<dbReference type="KEGG" id="spa:M6_Spy0598"/>
<dbReference type="HOGENOM" id="CLU_022398_0_2_9"/>
<dbReference type="Proteomes" id="UP000001167">
    <property type="component" value="Chromosome"/>
</dbReference>
<dbReference type="GO" id="GO:0005886">
    <property type="term" value="C:plasma membrane"/>
    <property type="evidence" value="ECO:0007669"/>
    <property type="project" value="UniProtKB-SubCell"/>
</dbReference>
<dbReference type="GO" id="GO:0045259">
    <property type="term" value="C:proton-transporting ATP synthase complex"/>
    <property type="evidence" value="ECO:0007669"/>
    <property type="project" value="UniProtKB-KW"/>
</dbReference>
<dbReference type="GO" id="GO:0005524">
    <property type="term" value="F:ATP binding"/>
    <property type="evidence" value="ECO:0007669"/>
    <property type="project" value="UniProtKB-UniRule"/>
</dbReference>
<dbReference type="GO" id="GO:0016887">
    <property type="term" value="F:ATP hydrolysis activity"/>
    <property type="evidence" value="ECO:0007669"/>
    <property type="project" value="InterPro"/>
</dbReference>
<dbReference type="GO" id="GO:0046933">
    <property type="term" value="F:proton-transporting ATP synthase activity, rotational mechanism"/>
    <property type="evidence" value="ECO:0007669"/>
    <property type="project" value="UniProtKB-UniRule"/>
</dbReference>
<dbReference type="CDD" id="cd18110">
    <property type="entry name" value="ATP-synt_F1_beta_C"/>
    <property type="match status" value="1"/>
</dbReference>
<dbReference type="CDD" id="cd18115">
    <property type="entry name" value="ATP-synt_F1_beta_N"/>
    <property type="match status" value="1"/>
</dbReference>
<dbReference type="CDD" id="cd01133">
    <property type="entry name" value="F1-ATPase_beta_CD"/>
    <property type="match status" value="1"/>
</dbReference>
<dbReference type="FunFam" id="1.10.1140.10:FF:000001">
    <property type="entry name" value="ATP synthase subunit beta"/>
    <property type="match status" value="1"/>
</dbReference>
<dbReference type="FunFam" id="2.40.10.170:FF:000005">
    <property type="entry name" value="ATP synthase subunit beta"/>
    <property type="match status" value="1"/>
</dbReference>
<dbReference type="FunFam" id="3.40.50.300:FF:000004">
    <property type="entry name" value="ATP synthase subunit beta"/>
    <property type="match status" value="1"/>
</dbReference>
<dbReference type="Gene3D" id="2.40.10.170">
    <property type="match status" value="1"/>
</dbReference>
<dbReference type="Gene3D" id="1.10.1140.10">
    <property type="entry name" value="Bovine Mitochondrial F1-atpase, Atp Synthase Beta Chain, Chain D, domain 3"/>
    <property type="match status" value="1"/>
</dbReference>
<dbReference type="Gene3D" id="3.40.50.300">
    <property type="entry name" value="P-loop containing nucleotide triphosphate hydrolases"/>
    <property type="match status" value="1"/>
</dbReference>
<dbReference type="HAMAP" id="MF_01347">
    <property type="entry name" value="ATP_synth_beta_bact"/>
    <property type="match status" value="1"/>
</dbReference>
<dbReference type="InterPro" id="IPR003593">
    <property type="entry name" value="AAA+_ATPase"/>
</dbReference>
<dbReference type="InterPro" id="IPR055190">
    <property type="entry name" value="ATP-synt_VA_C"/>
</dbReference>
<dbReference type="InterPro" id="IPR005722">
    <property type="entry name" value="ATP_synth_F1_bsu"/>
</dbReference>
<dbReference type="InterPro" id="IPR020003">
    <property type="entry name" value="ATPase_a/bsu_AS"/>
</dbReference>
<dbReference type="InterPro" id="IPR050053">
    <property type="entry name" value="ATPase_alpha/beta_chains"/>
</dbReference>
<dbReference type="InterPro" id="IPR004100">
    <property type="entry name" value="ATPase_F1/V1/A1_a/bsu_N"/>
</dbReference>
<dbReference type="InterPro" id="IPR036121">
    <property type="entry name" value="ATPase_F1/V1/A1_a/bsu_N_sf"/>
</dbReference>
<dbReference type="InterPro" id="IPR000194">
    <property type="entry name" value="ATPase_F1/V1/A1_a/bsu_nucl-bd"/>
</dbReference>
<dbReference type="InterPro" id="IPR024034">
    <property type="entry name" value="ATPase_F1/V1_b/a_C"/>
</dbReference>
<dbReference type="InterPro" id="IPR027417">
    <property type="entry name" value="P-loop_NTPase"/>
</dbReference>
<dbReference type="NCBIfam" id="TIGR01039">
    <property type="entry name" value="atpD"/>
    <property type="match status" value="1"/>
</dbReference>
<dbReference type="PANTHER" id="PTHR15184">
    <property type="entry name" value="ATP SYNTHASE"/>
    <property type="match status" value="1"/>
</dbReference>
<dbReference type="PANTHER" id="PTHR15184:SF71">
    <property type="entry name" value="ATP SYNTHASE SUBUNIT BETA, MITOCHONDRIAL"/>
    <property type="match status" value="1"/>
</dbReference>
<dbReference type="Pfam" id="PF00006">
    <property type="entry name" value="ATP-synt_ab"/>
    <property type="match status" value="1"/>
</dbReference>
<dbReference type="Pfam" id="PF02874">
    <property type="entry name" value="ATP-synt_ab_N"/>
    <property type="match status" value="1"/>
</dbReference>
<dbReference type="Pfam" id="PF22919">
    <property type="entry name" value="ATP-synt_VA_C"/>
    <property type="match status" value="1"/>
</dbReference>
<dbReference type="SMART" id="SM00382">
    <property type="entry name" value="AAA"/>
    <property type="match status" value="1"/>
</dbReference>
<dbReference type="SUPFAM" id="SSF47917">
    <property type="entry name" value="C-terminal domain of alpha and beta subunits of F1 ATP synthase"/>
    <property type="match status" value="1"/>
</dbReference>
<dbReference type="SUPFAM" id="SSF50615">
    <property type="entry name" value="N-terminal domain of alpha and beta subunits of F1 ATP synthase"/>
    <property type="match status" value="1"/>
</dbReference>
<dbReference type="SUPFAM" id="SSF52540">
    <property type="entry name" value="P-loop containing nucleoside triphosphate hydrolases"/>
    <property type="match status" value="1"/>
</dbReference>
<dbReference type="PROSITE" id="PS00152">
    <property type="entry name" value="ATPASE_ALPHA_BETA"/>
    <property type="match status" value="1"/>
</dbReference>
<accession>Q5XCY0</accession>
<keyword id="KW-0066">ATP synthesis</keyword>
<keyword id="KW-0067">ATP-binding</keyword>
<keyword id="KW-1003">Cell membrane</keyword>
<keyword id="KW-0139">CF(1)</keyword>
<keyword id="KW-0375">Hydrogen ion transport</keyword>
<keyword id="KW-0406">Ion transport</keyword>
<keyword id="KW-0472">Membrane</keyword>
<keyword id="KW-0547">Nucleotide-binding</keyword>
<keyword id="KW-1278">Translocase</keyword>
<keyword id="KW-0813">Transport</keyword>
<comment type="function">
    <text evidence="1">Produces ATP from ADP in the presence of a proton gradient across the membrane. The catalytic sites are hosted primarily by the beta subunits.</text>
</comment>
<comment type="catalytic activity">
    <reaction evidence="1">
        <text>ATP + H2O + 4 H(+)(in) = ADP + phosphate + 5 H(+)(out)</text>
        <dbReference type="Rhea" id="RHEA:57720"/>
        <dbReference type="ChEBI" id="CHEBI:15377"/>
        <dbReference type="ChEBI" id="CHEBI:15378"/>
        <dbReference type="ChEBI" id="CHEBI:30616"/>
        <dbReference type="ChEBI" id="CHEBI:43474"/>
        <dbReference type="ChEBI" id="CHEBI:456216"/>
        <dbReference type="EC" id="7.1.2.2"/>
    </reaction>
</comment>
<comment type="subunit">
    <text evidence="1">F-type ATPases have 2 components, CF(1) - the catalytic core - and CF(0) - the membrane proton channel. CF(1) has five subunits: alpha(3), beta(3), gamma(1), delta(1), epsilon(1). CF(0) has three main subunits: a(1), b(2) and c(9-12). The alpha and beta chains form an alternating ring which encloses part of the gamma chain. CF(1) is attached to CF(0) by a central stalk formed by the gamma and epsilon chains, while a peripheral stalk is formed by the delta and b chains.</text>
</comment>
<comment type="subcellular location">
    <subcellularLocation>
        <location evidence="1">Cell membrane</location>
        <topology evidence="1">Peripheral membrane protein</topology>
    </subcellularLocation>
</comment>
<comment type="similarity">
    <text evidence="1">Belongs to the ATPase alpha/beta chains family.</text>
</comment>
<proteinExistence type="inferred from homology"/>
<name>ATPB_STRP6</name>
<gene>
    <name evidence="1" type="primary">atpD</name>
    <name type="ordered locus">M6_Spy0598</name>
</gene>
<evidence type="ECO:0000255" key="1">
    <source>
        <dbReference type="HAMAP-Rule" id="MF_01347"/>
    </source>
</evidence>